<comment type="function">
    <text evidence="1">This protein is located at the 30S-50S ribosomal subunit interface and may play a role in the structure and function of the aminoacyl-tRNA binding site.</text>
</comment>
<comment type="similarity">
    <text evidence="1">Belongs to the bacterial ribosomal protein bL19 family.</text>
</comment>
<reference key="1">
    <citation type="journal article" date="2008" name="BMC Genomics">
        <title>Acidithiobacillus ferrooxidans metabolism: from genome sequence to industrial applications.</title>
        <authorList>
            <person name="Valdes J."/>
            <person name="Pedroso I."/>
            <person name="Quatrini R."/>
            <person name="Dodson R.J."/>
            <person name="Tettelin H."/>
            <person name="Blake R. II"/>
            <person name="Eisen J.A."/>
            <person name="Holmes D.S."/>
        </authorList>
    </citation>
    <scope>NUCLEOTIDE SEQUENCE [LARGE SCALE GENOMIC DNA]</scope>
    <source>
        <strain>ATCC 23270 / DSM 14882 / CIP 104768 / NCIMB 8455</strain>
    </source>
</reference>
<protein>
    <recommendedName>
        <fullName evidence="1">Large ribosomal subunit protein bL19</fullName>
    </recommendedName>
    <alternativeName>
        <fullName evidence="2">50S ribosomal protein L19</fullName>
    </alternativeName>
</protein>
<organism>
    <name type="scientific">Acidithiobacillus ferrooxidans (strain ATCC 23270 / DSM 14882 / CIP 104768 / NCIMB 8455)</name>
    <name type="common">Ferrobacillus ferrooxidans (strain ATCC 23270)</name>
    <dbReference type="NCBI Taxonomy" id="243159"/>
    <lineage>
        <taxon>Bacteria</taxon>
        <taxon>Pseudomonadati</taxon>
        <taxon>Pseudomonadota</taxon>
        <taxon>Acidithiobacillia</taxon>
        <taxon>Acidithiobacillales</taxon>
        <taxon>Acidithiobacillaceae</taxon>
        <taxon>Acidithiobacillus</taxon>
    </lineage>
</organism>
<name>RL19_ACIF2</name>
<sequence length="114" mass="12869">MNIIDEINQEQMQSVLPAFGAGDTVAVHVKVKEGDRERVQIFEGICIARRNRGLHSAFTVRKISNGEGVERVFPSYSPLVTKVEVKRRGDVRRAKLYYLRDLSGKAARIKEKLG</sequence>
<proteinExistence type="inferred from homology"/>
<accession>B7J945</accession>
<gene>
    <name evidence="1" type="primary">rplS</name>
    <name type="ordered locus">AFE_2852</name>
</gene>
<keyword id="KW-1185">Reference proteome</keyword>
<keyword id="KW-0687">Ribonucleoprotein</keyword>
<keyword id="KW-0689">Ribosomal protein</keyword>
<feature type="chain" id="PRO_1000193772" description="Large ribosomal subunit protein bL19">
    <location>
        <begin position="1"/>
        <end position="114"/>
    </location>
</feature>
<evidence type="ECO:0000255" key="1">
    <source>
        <dbReference type="HAMAP-Rule" id="MF_00402"/>
    </source>
</evidence>
<evidence type="ECO:0000305" key="2"/>
<dbReference type="EMBL" id="CP001219">
    <property type="protein sequence ID" value="ACK77837.1"/>
    <property type="molecule type" value="Genomic_DNA"/>
</dbReference>
<dbReference type="RefSeq" id="WP_009564594.1">
    <property type="nucleotide sequence ID" value="NC_011761.1"/>
</dbReference>
<dbReference type="SMR" id="B7J945"/>
<dbReference type="STRING" id="243159.AFE_2852"/>
<dbReference type="PaxDb" id="243159-AFE_2852"/>
<dbReference type="GeneID" id="65281879"/>
<dbReference type="KEGG" id="afr:AFE_2852"/>
<dbReference type="eggNOG" id="COG0335">
    <property type="taxonomic scope" value="Bacteria"/>
</dbReference>
<dbReference type="HOGENOM" id="CLU_103507_2_1_6"/>
<dbReference type="Proteomes" id="UP000001362">
    <property type="component" value="Chromosome"/>
</dbReference>
<dbReference type="GO" id="GO:0022625">
    <property type="term" value="C:cytosolic large ribosomal subunit"/>
    <property type="evidence" value="ECO:0007669"/>
    <property type="project" value="TreeGrafter"/>
</dbReference>
<dbReference type="GO" id="GO:0003735">
    <property type="term" value="F:structural constituent of ribosome"/>
    <property type="evidence" value="ECO:0007669"/>
    <property type="project" value="InterPro"/>
</dbReference>
<dbReference type="GO" id="GO:0006412">
    <property type="term" value="P:translation"/>
    <property type="evidence" value="ECO:0007669"/>
    <property type="project" value="UniProtKB-UniRule"/>
</dbReference>
<dbReference type="FunFam" id="2.30.30.790:FF:000001">
    <property type="entry name" value="50S ribosomal protein L19"/>
    <property type="match status" value="1"/>
</dbReference>
<dbReference type="Gene3D" id="2.30.30.790">
    <property type="match status" value="1"/>
</dbReference>
<dbReference type="HAMAP" id="MF_00402">
    <property type="entry name" value="Ribosomal_bL19"/>
    <property type="match status" value="1"/>
</dbReference>
<dbReference type="InterPro" id="IPR001857">
    <property type="entry name" value="Ribosomal_bL19"/>
</dbReference>
<dbReference type="InterPro" id="IPR018257">
    <property type="entry name" value="Ribosomal_bL19_CS"/>
</dbReference>
<dbReference type="InterPro" id="IPR038657">
    <property type="entry name" value="Ribosomal_bL19_sf"/>
</dbReference>
<dbReference type="InterPro" id="IPR008991">
    <property type="entry name" value="Translation_prot_SH3-like_sf"/>
</dbReference>
<dbReference type="NCBIfam" id="TIGR01024">
    <property type="entry name" value="rplS_bact"/>
    <property type="match status" value="1"/>
</dbReference>
<dbReference type="PANTHER" id="PTHR15680:SF9">
    <property type="entry name" value="LARGE RIBOSOMAL SUBUNIT PROTEIN BL19M"/>
    <property type="match status" value="1"/>
</dbReference>
<dbReference type="PANTHER" id="PTHR15680">
    <property type="entry name" value="RIBOSOMAL PROTEIN L19"/>
    <property type="match status" value="1"/>
</dbReference>
<dbReference type="Pfam" id="PF01245">
    <property type="entry name" value="Ribosomal_L19"/>
    <property type="match status" value="1"/>
</dbReference>
<dbReference type="PIRSF" id="PIRSF002191">
    <property type="entry name" value="Ribosomal_L19"/>
    <property type="match status" value="1"/>
</dbReference>
<dbReference type="PRINTS" id="PR00061">
    <property type="entry name" value="RIBOSOMALL19"/>
</dbReference>
<dbReference type="SUPFAM" id="SSF50104">
    <property type="entry name" value="Translation proteins SH3-like domain"/>
    <property type="match status" value="1"/>
</dbReference>
<dbReference type="PROSITE" id="PS01015">
    <property type="entry name" value="RIBOSOMAL_L19"/>
    <property type="match status" value="1"/>
</dbReference>